<evidence type="ECO:0000255" key="1">
    <source>
        <dbReference type="HAMAP-Rule" id="MF_00500"/>
    </source>
</evidence>
<evidence type="ECO:0000256" key="2">
    <source>
        <dbReference type="SAM" id="MobiDB-lite"/>
    </source>
</evidence>
<evidence type="ECO:0000305" key="3"/>
<keyword id="KW-0687">Ribonucleoprotein</keyword>
<keyword id="KW-0689">Ribosomal protein</keyword>
<keyword id="KW-0694">RNA-binding</keyword>
<keyword id="KW-0699">rRNA-binding</keyword>
<dbReference type="EMBL" id="CP001177">
    <property type="protein sequence ID" value="ACJ82444.1"/>
    <property type="molecule type" value="Genomic_DNA"/>
</dbReference>
<dbReference type="SMR" id="B7HPM1"/>
<dbReference type="KEGG" id="bcr:BCAH187_A4455"/>
<dbReference type="HOGENOM" id="CLU_160655_1_0_9"/>
<dbReference type="Proteomes" id="UP000002214">
    <property type="component" value="Chromosome"/>
</dbReference>
<dbReference type="GO" id="GO:0005829">
    <property type="term" value="C:cytosol"/>
    <property type="evidence" value="ECO:0007669"/>
    <property type="project" value="TreeGrafter"/>
</dbReference>
<dbReference type="GO" id="GO:0015935">
    <property type="term" value="C:small ribosomal subunit"/>
    <property type="evidence" value="ECO:0007669"/>
    <property type="project" value="TreeGrafter"/>
</dbReference>
<dbReference type="GO" id="GO:0070181">
    <property type="term" value="F:small ribosomal subunit rRNA binding"/>
    <property type="evidence" value="ECO:0007669"/>
    <property type="project" value="TreeGrafter"/>
</dbReference>
<dbReference type="GO" id="GO:0003735">
    <property type="term" value="F:structural constituent of ribosome"/>
    <property type="evidence" value="ECO:0007669"/>
    <property type="project" value="InterPro"/>
</dbReference>
<dbReference type="GO" id="GO:0006412">
    <property type="term" value="P:translation"/>
    <property type="evidence" value="ECO:0007669"/>
    <property type="project" value="UniProtKB-UniRule"/>
</dbReference>
<dbReference type="FunFam" id="1.20.58.110:FF:000001">
    <property type="entry name" value="30S ribosomal protein S20"/>
    <property type="match status" value="1"/>
</dbReference>
<dbReference type="Gene3D" id="1.20.58.110">
    <property type="entry name" value="Ribosomal protein S20"/>
    <property type="match status" value="1"/>
</dbReference>
<dbReference type="HAMAP" id="MF_00500">
    <property type="entry name" value="Ribosomal_bS20"/>
    <property type="match status" value="1"/>
</dbReference>
<dbReference type="InterPro" id="IPR002583">
    <property type="entry name" value="Ribosomal_bS20"/>
</dbReference>
<dbReference type="InterPro" id="IPR036510">
    <property type="entry name" value="Ribosomal_bS20_sf"/>
</dbReference>
<dbReference type="NCBIfam" id="TIGR00029">
    <property type="entry name" value="S20"/>
    <property type="match status" value="1"/>
</dbReference>
<dbReference type="PANTHER" id="PTHR33398">
    <property type="entry name" value="30S RIBOSOMAL PROTEIN S20"/>
    <property type="match status" value="1"/>
</dbReference>
<dbReference type="PANTHER" id="PTHR33398:SF1">
    <property type="entry name" value="SMALL RIBOSOMAL SUBUNIT PROTEIN BS20C"/>
    <property type="match status" value="1"/>
</dbReference>
<dbReference type="Pfam" id="PF01649">
    <property type="entry name" value="Ribosomal_S20p"/>
    <property type="match status" value="1"/>
</dbReference>
<dbReference type="SUPFAM" id="SSF46992">
    <property type="entry name" value="Ribosomal protein S20"/>
    <property type="match status" value="1"/>
</dbReference>
<gene>
    <name evidence="1" type="primary">rpsT</name>
    <name type="ordered locus">BCAH187_A4455</name>
</gene>
<proteinExistence type="inferred from homology"/>
<feature type="chain" id="PRO_1000126400" description="Small ribosomal subunit protein bS20">
    <location>
        <begin position="1"/>
        <end position="85"/>
    </location>
</feature>
<feature type="region of interest" description="Disordered" evidence="2">
    <location>
        <begin position="1"/>
        <end position="25"/>
    </location>
</feature>
<accession>B7HPM1</accession>
<reference key="1">
    <citation type="submission" date="2008-10" db="EMBL/GenBank/DDBJ databases">
        <title>Genome sequence of Bacillus cereus AH187.</title>
        <authorList>
            <person name="Dodson R.J."/>
            <person name="Durkin A.S."/>
            <person name="Rosovitz M.J."/>
            <person name="Rasko D.A."/>
            <person name="Kolsto A.B."/>
            <person name="Okstad O.A."/>
            <person name="Ravel J."/>
            <person name="Sutton G."/>
        </authorList>
    </citation>
    <scope>NUCLEOTIDE SEQUENCE [LARGE SCALE GENOMIC DNA]</scope>
    <source>
        <strain>AH187</strain>
    </source>
</reference>
<organism>
    <name type="scientific">Bacillus cereus (strain AH187)</name>
    <dbReference type="NCBI Taxonomy" id="405534"/>
    <lineage>
        <taxon>Bacteria</taxon>
        <taxon>Bacillati</taxon>
        <taxon>Bacillota</taxon>
        <taxon>Bacilli</taxon>
        <taxon>Bacillales</taxon>
        <taxon>Bacillaceae</taxon>
        <taxon>Bacillus</taxon>
        <taxon>Bacillus cereus group</taxon>
    </lineage>
</organism>
<name>RS20_BACC7</name>
<comment type="function">
    <text evidence="1">Binds directly to 16S ribosomal RNA.</text>
</comment>
<comment type="similarity">
    <text evidence="1">Belongs to the bacterial ribosomal protein bS20 family.</text>
</comment>
<sequence>MANIKSAIKRAKLSEERRAHNASIKSDMRSAVKTVEALVTNNDLENAKEAFKTASKKLDKAARKGLIHQNAAARQKSRLAKQVNA</sequence>
<protein>
    <recommendedName>
        <fullName evidence="1">Small ribosomal subunit protein bS20</fullName>
    </recommendedName>
    <alternativeName>
        <fullName evidence="3">30S ribosomal protein S20</fullName>
    </alternativeName>
</protein>